<gene>
    <name evidence="1" type="primary">ndk</name>
    <name type="ordered locus">Clim_2180</name>
</gene>
<dbReference type="EC" id="2.7.4.6" evidence="1"/>
<dbReference type="EMBL" id="CP001097">
    <property type="protein sequence ID" value="ACD91204.1"/>
    <property type="molecule type" value="Genomic_DNA"/>
</dbReference>
<dbReference type="RefSeq" id="WP_012467072.1">
    <property type="nucleotide sequence ID" value="NC_010803.1"/>
</dbReference>
<dbReference type="SMR" id="B3EGU1"/>
<dbReference type="STRING" id="290315.Clim_2180"/>
<dbReference type="KEGG" id="cli:Clim_2180"/>
<dbReference type="eggNOG" id="COG0105">
    <property type="taxonomic scope" value="Bacteria"/>
</dbReference>
<dbReference type="HOGENOM" id="CLU_060216_8_1_10"/>
<dbReference type="OrthoDB" id="9801161at2"/>
<dbReference type="Proteomes" id="UP000008841">
    <property type="component" value="Chromosome"/>
</dbReference>
<dbReference type="GO" id="GO:0005737">
    <property type="term" value="C:cytoplasm"/>
    <property type="evidence" value="ECO:0007669"/>
    <property type="project" value="UniProtKB-SubCell"/>
</dbReference>
<dbReference type="GO" id="GO:0005524">
    <property type="term" value="F:ATP binding"/>
    <property type="evidence" value="ECO:0007669"/>
    <property type="project" value="UniProtKB-UniRule"/>
</dbReference>
<dbReference type="GO" id="GO:0046872">
    <property type="term" value="F:metal ion binding"/>
    <property type="evidence" value="ECO:0007669"/>
    <property type="project" value="UniProtKB-KW"/>
</dbReference>
<dbReference type="GO" id="GO:0004550">
    <property type="term" value="F:nucleoside diphosphate kinase activity"/>
    <property type="evidence" value="ECO:0007669"/>
    <property type="project" value="UniProtKB-UniRule"/>
</dbReference>
<dbReference type="GO" id="GO:0006241">
    <property type="term" value="P:CTP biosynthetic process"/>
    <property type="evidence" value="ECO:0007669"/>
    <property type="project" value="UniProtKB-UniRule"/>
</dbReference>
<dbReference type="GO" id="GO:0006183">
    <property type="term" value="P:GTP biosynthetic process"/>
    <property type="evidence" value="ECO:0007669"/>
    <property type="project" value="UniProtKB-UniRule"/>
</dbReference>
<dbReference type="GO" id="GO:0006228">
    <property type="term" value="P:UTP biosynthetic process"/>
    <property type="evidence" value="ECO:0007669"/>
    <property type="project" value="UniProtKB-UniRule"/>
</dbReference>
<dbReference type="CDD" id="cd04413">
    <property type="entry name" value="NDPk_I"/>
    <property type="match status" value="1"/>
</dbReference>
<dbReference type="FunFam" id="3.30.70.141:FF:000003">
    <property type="entry name" value="Nucleoside diphosphate kinase"/>
    <property type="match status" value="1"/>
</dbReference>
<dbReference type="Gene3D" id="3.30.70.141">
    <property type="entry name" value="Nucleoside diphosphate kinase-like domain"/>
    <property type="match status" value="1"/>
</dbReference>
<dbReference type="HAMAP" id="MF_00451">
    <property type="entry name" value="NDP_kinase"/>
    <property type="match status" value="1"/>
</dbReference>
<dbReference type="InterPro" id="IPR034907">
    <property type="entry name" value="NDK-like_dom"/>
</dbReference>
<dbReference type="InterPro" id="IPR036850">
    <property type="entry name" value="NDK-like_dom_sf"/>
</dbReference>
<dbReference type="InterPro" id="IPR001564">
    <property type="entry name" value="Nucleoside_diP_kinase"/>
</dbReference>
<dbReference type="NCBIfam" id="NF001908">
    <property type="entry name" value="PRK00668.1"/>
    <property type="match status" value="1"/>
</dbReference>
<dbReference type="NCBIfam" id="NF011113">
    <property type="entry name" value="PRK14541.1"/>
    <property type="match status" value="1"/>
</dbReference>
<dbReference type="PANTHER" id="PTHR46161">
    <property type="entry name" value="NUCLEOSIDE DIPHOSPHATE KINASE"/>
    <property type="match status" value="1"/>
</dbReference>
<dbReference type="PANTHER" id="PTHR46161:SF3">
    <property type="entry name" value="NUCLEOSIDE DIPHOSPHATE KINASE DDB_G0292928-RELATED"/>
    <property type="match status" value="1"/>
</dbReference>
<dbReference type="Pfam" id="PF00334">
    <property type="entry name" value="NDK"/>
    <property type="match status" value="1"/>
</dbReference>
<dbReference type="PRINTS" id="PR01243">
    <property type="entry name" value="NUCDPKINASE"/>
</dbReference>
<dbReference type="SMART" id="SM00562">
    <property type="entry name" value="NDK"/>
    <property type="match status" value="1"/>
</dbReference>
<dbReference type="SUPFAM" id="SSF54919">
    <property type="entry name" value="Nucleoside diphosphate kinase, NDK"/>
    <property type="match status" value="1"/>
</dbReference>
<dbReference type="PROSITE" id="PS51374">
    <property type="entry name" value="NDPK_LIKE"/>
    <property type="match status" value="1"/>
</dbReference>
<name>NDK_CHLL2</name>
<evidence type="ECO:0000255" key="1">
    <source>
        <dbReference type="HAMAP-Rule" id="MF_00451"/>
    </source>
</evidence>
<reference key="1">
    <citation type="submission" date="2008-05" db="EMBL/GenBank/DDBJ databases">
        <title>Complete sequence of Chlorobium limicola DSM 245.</title>
        <authorList>
            <consortium name="US DOE Joint Genome Institute"/>
            <person name="Lucas S."/>
            <person name="Copeland A."/>
            <person name="Lapidus A."/>
            <person name="Glavina del Rio T."/>
            <person name="Dalin E."/>
            <person name="Tice H."/>
            <person name="Bruce D."/>
            <person name="Goodwin L."/>
            <person name="Pitluck S."/>
            <person name="Schmutz J."/>
            <person name="Larimer F."/>
            <person name="Land M."/>
            <person name="Hauser L."/>
            <person name="Kyrpides N."/>
            <person name="Ovchinnikova G."/>
            <person name="Zhao F."/>
            <person name="Li T."/>
            <person name="Liu Z."/>
            <person name="Overmann J."/>
            <person name="Bryant D.A."/>
            <person name="Richardson P."/>
        </authorList>
    </citation>
    <scope>NUCLEOTIDE SEQUENCE [LARGE SCALE GENOMIC DNA]</scope>
    <source>
        <strain>DSM 245 / NBRC 103803 / 6330</strain>
    </source>
</reference>
<sequence>MERTLTILKPDCVRKQLIGAVIDKIERAGFRVVAMKKTRLTQETAGEFYAVHRERPFYGELVEFMSSGPCVPMILEKENAVADFRTLIGATDPAQADEGTVRKLYADSKGENIVHGSDSAENAAVEAGFFFSAEEVVRVD</sequence>
<proteinExistence type="inferred from homology"/>
<protein>
    <recommendedName>
        <fullName evidence="1">Nucleoside diphosphate kinase</fullName>
        <shortName evidence="1">NDK</shortName>
        <shortName evidence="1">NDP kinase</shortName>
        <ecNumber evidence="1">2.7.4.6</ecNumber>
    </recommendedName>
    <alternativeName>
        <fullName evidence="1">Nucleoside-2-P kinase</fullName>
    </alternativeName>
</protein>
<organism>
    <name type="scientific">Chlorobium limicola (strain DSM 245 / NBRC 103803 / 6330)</name>
    <dbReference type="NCBI Taxonomy" id="290315"/>
    <lineage>
        <taxon>Bacteria</taxon>
        <taxon>Pseudomonadati</taxon>
        <taxon>Chlorobiota</taxon>
        <taxon>Chlorobiia</taxon>
        <taxon>Chlorobiales</taxon>
        <taxon>Chlorobiaceae</taxon>
        <taxon>Chlorobium/Pelodictyon group</taxon>
        <taxon>Chlorobium</taxon>
    </lineage>
</organism>
<feature type="chain" id="PRO_1000124943" description="Nucleoside diphosphate kinase">
    <location>
        <begin position="1"/>
        <end position="140"/>
    </location>
</feature>
<feature type="active site" description="Pros-phosphohistidine intermediate" evidence="1">
    <location>
        <position position="115"/>
    </location>
</feature>
<feature type="binding site" evidence="1">
    <location>
        <position position="9"/>
    </location>
    <ligand>
        <name>ATP</name>
        <dbReference type="ChEBI" id="CHEBI:30616"/>
    </ligand>
</feature>
<feature type="binding site" evidence="1">
    <location>
        <position position="57"/>
    </location>
    <ligand>
        <name>ATP</name>
        <dbReference type="ChEBI" id="CHEBI:30616"/>
    </ligand>
</feature>
<feature type="binding site" evidence="1">
    <location>
        <position position="85"/>
    </location>
    <ligand>
        <name>ATP</name>
        <dbReference type="ChEBI" id="CHEBI:30616"/>
    </ligand>
</feature>
<feature type="binding site" evidence="1">
    <location>
        <position position="91"/>
    </location>
    <ligand>
        <name>ATP</name>
        <dbReference type="ChEBI" id="CHEBI:30616"/>
    </ligand>
</feature>
<feature type="binding site" evidence="1">
    <location>
        <position position="102"/>
    </location>
    <ligand>
        <name>ATP</name>
        <dbReference type="ChEBI" id="CHEBI:30616"/>
    </ligand>
</feature>
<feature type="binding site" evidence="1">
    <location>
        <position position="112"/>
    </location>
    <ligand>
        <name>ATP</name>
        <dbReference type="ChEBI" id="CHEBI:30616"/>
    </ligand>
</feature>
<keyword id="KW-0067">ATP-binding</keyword>
<keyword id="KW-0963">Cytoplasm</keyword>
<keyword id="KW-0418">Kinase</keyword>
<keyword id="KW-0460">Magnesium</keyword>
<keyword id="KW-0479">Metal-binding</keyword>
<keyword id="KW-0546">Nucleotide metabolism</keyword>
<keyword id="KW-0547">Nucleotide-binding</keyword>
<keyword id="KW-0597">Phosphoprotein</keyword>
<keyword id="KW-0808">Transferase</keyword>
<accession>B3EGU1</accession>
<comment type="function">
    <text evidence="1">Major role in the synthesis of nucleoside triphosphates other than ATP. The ATP gamma phosphate is transferred to the NDP beta phosphate via a ping-pong mechanism, using a phosphorylated active-site intermediate.</text>
</comment>
<comment type="catalytic activity">
    <reaction evidence="1">
        <text>a 2'-deoxyribonucleoside 5'-diphosphate + ATP = a 2'-deoxyribonucleoside 5'-triphosphate + ADP</text>
        <dbReference type="Rhea" id="RHEA:44640"/>
        <dbReference type="ChEBI" id="CHEBI:30616"/>
        <dbReference type="ChEBI" id="CHEBI:61560"/>
        <dbReference type="ChEBI" id="CHEBI:73316"/>
        <dbReference type="ChEBI" id="CHEBI:456216"/>
        <dbReference type="EC" id="2.7.4.6"/>
    </reaction>
</comment>
<comment type="catalytic activity">
    <reaction evidence="1">
        <text>a ribonucleoside 5'-diphosphate + ATP = a ribonucleoside 5'-triphosphate + ADP</text>
        <dbReference type="Rhea" id="RHEA:18113"/>
        <dbReference type="ChEBI" id="CHEBI:30616"/>
        <dbReference type="ChEBI" id="CHEBI:57930"/>
        <dbReference type="ChEBI" id="CHEBI:61557"/>
        <dbReference type="ChEBI" id="CHEBI:456216"/>
        <dbReference type="EC" id="2.7.4.6"/>
    </reaction>
</comment>
<comment type="cofactor">
    <cofactor evidence="1">
        <name>Mg(2+)</name>
        <dbReference type="ChEBI" id="CHEBI:18420"/>
    </cofactor>
</comment>
<comment type="subunit">
    <text evidence="1">Homotetramer.</text>
</comment>
<comment type="subcellular location">
    <subcellularLocation>
        <location evidence="1">Cytoplasm</location>
    </subcellularLocation>
</comment>
<comment type="similarity">
    <text evidence="1">Belongs to the NDK family.</text>
</comment>